<dbReference type="EC" id="2.7.7.3" evidence="1"/>
<dbReference type="EMBL" id="CP000437">
    <property type="protein sequence ID" value="ABI83139.1"/>
    <property type="molecule type" value="Genomic_DNA"/>
</dbReference>
<dbReference type="RefSeq" id="WP_003016535.1">
    <property type="nucleotide sequence ID" value="NC_017463.1"/>
</dbReference>
<dbReference type="SMR" id="Q0BL95"/>
<dbReference type="KEGG" id="fth:FTH_1295"/>
<dbReference type="UniPathway" id="UPA00241">
    <property type="reaction ID" value="UER00355"/>
</dbReference>
<dbReference type="GO" id="GO:0005737">
    <property type="term" value="C:cytoplasm"/>
    <property type="evidence" value="ECO:0007669"/>
    <property type="project" value="UniProtKB-SubCell"/>
</dbReference>
<dbReference type="GO" id="GO:0005524">
    <property type="term" value="F:ATP binding"/>
    <property type="evidence" value="ECO:0007669"/>
    <property type="project" value="UniProtKB-KW"/>
</dbReference>
<dbReference type="GO" id="GO:0004595">
    <property type="term" value="F:pantetheine-phosphate adenylyltransferase activity"/>
    <property type="evidence" value="ECO:0007669"/>
    <property type="project" value="UniProtKB-UniRule"/>
</dbReference>
<dbReference type="GO" id="GO:0015937">
    <property type="term" value="P:coenzyme A biosynthetic process"/>
    <property type="evidence" value="ECO:0007669"/>
    <property type="project" value="UniProtKB-UniRule"/>
</dbReference>
<dbReference type="CDD" id="cd02163">
    <property type="entry name" value="PPAT"/>
    <property type="match status" value="1"/>
</dbReference>
<dbReference type="Gene3D" id="3.40.50.620">
    <property type="entry name" value="HUPs"/>
    <property type="match status" value="1"/>
</dbReference>
<dbReference type="HAMAP" id="MF_00151">
    <property type="entry name" value="PPAT_bact"/>
    <property type="match status" value="1"/>
</dbReference>
<dbReference type="InterPro" id="IPR004821">
    <property type="entry name" value="Cyt_trans-like"/>
</dbReference>
<dbReference type="InterPro" id="IPR001980">
    <property type="entry name" value="PPAT"/>
</dbReference>
<dbReference type="InterPro" id="IPR014729">
    <property type="entry name" value="Rossmann-like_a/b/a_fold"/>
</dbReference>
<dbReference type="NCBIfam" id="TIGR01510">
    <property type="entry name" value="coaD_prev_kdtB"/>
    <property type="match status" value="1"/>
</dbReference>
<dbReference type="NCBIfam" id="TIGR00125">
    <property type="entry name" value="cyt_tran_rel"/>
    <property type="match status" value="1"/>
</dbReference>
<dbReference type="PANTHER" id="PTHR21342">
    <property type="entry name" value="PHOSPHOPANTETHEINE ADENYLYLTRANSFERASE"/>
    <property type="match status" value="1"/>
</dbReference>
<dbReference type="PANTHER" id="PTHR21342:SF1">
    <property type="entry name" value="PHOSPHOPANTETHEINE ADENYLYLTRANSFERASE"/>
    <property type="match status" value="1"/>
</dbReference>
<dbReference type="Pfam" id="PF01467">
    <property type="entry name" value="CTP_transf_like"/>
    <property type="match status" value="1"/>
</dbReference>
<dbReference type="PRINTS" id="PR01020">
    <property type="entry name" value="LPSBIOSNTHSS"/>
</dbReference>
<dbReference type="SUPFAM" id="SSF52374">
    <property type="entry name" value="Nucleotidylyl transferase"/>
    <property type="match status" value="1"/>
</dbReference>
<evidence type="ECO:0000255" key="1">
    <source>
        <dbReference type="HAMAP-Rule" id="MF_00151"/>
    </source>
</evidence>
<proteinExistence type="inferred from homology"/>
<accession>Q0BL95</accession>
<keyword id="KW-0067">ATP-binding</keyword>
<keyword id="KW-0173">Coenzyme A biosynthesis</keyword>
<keyword id="KW-0963">Cytoplasm</keyword>
<keyword id="KW-0460">Magnesium</keyword>
<keyword id="KW-0547">Nucleotide-binding</keyword>
<keyword id="KW-0548">Nucleotidyltransferase</keyword>
<keyword id="KW-0808">Transferase</keyword>
<gene>
    <name evidence="1" type="primary">coaD</name>
    <name type="ordered locus">FTH_1295</name>
</gene>
<name>COAD_FRATO</name>
<organism>
    <name type="scientific">Francisella tularensis subsp. holarctica (strain OSU18)</name>
    <dbReference type="NCBI Taxonomy" id="393011"/>
    <lineage>
        <taxon>Bacteria</taxon>
        <taxon>Pseudomonadati</taxon>
        <taxon>Pseudomonadota</taxon>
        <taxon>Gammaproteobacteria</taxon>
        <taxon>Thiotrichales</taxon>
        <taxon>Francisellaceae</taxon>
        <taxon>Francisella</taxon>
    </lineage>
</organism>
<feature type="chain" id="PRO_1000011148" description="Phosphopantetheine adenylyltransferase">
    <location>
        <begin position="1"/>
        <end position="162"/>
    </location>
</feature>
<feature type="binding site" evidence="1">
    <location>
        <begin position="10"/>
        <end position="11"/>
    </location>
    <ligand>
        <name>ATP</name>
        <dbReference type="ChEBI" id="CHEBI:30616"/>
    </ligand>
</feature>
<feature type="binding site" evidence="1">
    <location>
        <position position="10"/>
    </location>
    <ligand>
        <name>substrate</name>
    </ligand>
</feature>
<feature type="binding site" evidence="1">
    <location>
        <position position="18"/>
    </location>
    <ligand>
        <name>ATP</name>
        <dbReference type="ChEBI" id="CHEBI:30616"/>
    </ligand>
</feature>
<feature type="binding site" evidence="1">
    <location>
        <position position="42"/>
    </location>
    <ligand>
        <name>substrate</name>
    </ligand>
</feature>
<feature type="binding site" evidence="1">
    <location>
        <position position="74"/>
    </location>
    <ligand>
        <name>substrate</name>
    </ligand>
</feature>
<feature type="binding site" evidence="1">
    <location>
        <position position="88"/>
    </location>
    <ligand>
        <name>substrate</name>
    </ligand>
</feature>
<feature type="binding site" evidence="1">
    <location>
        <begin position="89"/>
        <end position="91"/>
    </location>
    <ligand>
        <name>ATP</name>
        <dbReference type="ChEBI" id="CHEBI:30616"/>
    </ligand>
</feature>
<feature type="binding site" evidence="1">
    <location>
        <position position="99"/>
    </location>
    <ligand>
        <name>ATP</name>
        <dbReference type="ChEBI" id="CHEBI:30616"/>
    </ligand>
</feature>
<feature type="binding site" evidence="1">
    <location>
        <begin position="124"/>
        <end position="130"/>
    </location>
    <ligand>
        <name>ATP</name>
        <dbReference type="ChEBI" id="CHEBI:30616"/>
    </ligand>
</feature>
<feature type="site" description="Transition state stabilizer" evidence="1">
    <location>
        <position position="18"/>
    </location>
</feature>
<sequence>MNKIAIYPGTFDPITNGHVDLVERALNIFDEIVVAVSTAYGKNTLFDIRIREQMIKEVFKDNQRVKVVSFQGLLVDTAVKHNACAIVRGLRAVSDFDYEFQMSSMNNKLNSDIQTIFLTPSEKFSCISSTLVRAVAIHNYKRVDEFVPECVFREIKLKYSKE</sequence>
<comment type="function">
    <text evidence="1">Reversibly transfers an adenylyl group from ATP to 4'-phosphopantetheine, yielding dephospho-CoA (dPCoA) and pyrophosphate.</text>
</comment>
<comment type="catalytic activity">
    <reaction evidence="1">
        <text>(R)-4'-phosphopantetheine + ATP + H(+) = 3'-dephospho-CoA + diphosphate</text>
        <dbReference type="Rhea" id="RHEA:19801"/>
        <dbReference type="ChEBI" id="CHEBI:15378"/>
        <dbReference type="ChEBI" id="CHEBI:30616"/>
        <dbReference type="ChEBI" id="CHEBI:33019"/>
        <dbReference type="ChEBI" id="CHEBI:57328"/>
        <dbReference type="ChEBI" id="CHEBI:61723"/>
        <dbReference type="EC" id="2.7.7.3"/>
    </reaction>
</comment>
<comment type="cofactor">
    <cofactor evidence="1">
        <name>Mg(2+)</name>
        <dbReference type="ChEBI" id="CHEBI:18420"/>
    </cofactor>
</comment>
<comment type="pathway">
    <text evidence="1">Cofactor biosynthesis; coenzyme A biosynthesis; CoA from (R)-pantothenate: step 4/5.</text>
</comment>
<comment type="subunit">
    <text evidence="1">Homohexamer.</text>
</comment>
<comment type="subcellular location">
    <subcellularLocation>
        <location evidence="1">Cytoplasm</location>
    </subcellularLocation>
</comment>
<comment type="similarity">
    <text evidence="1">Belongs to the bacterial CoaD family.</text>
</comment>
<protein>
    <recommendedName>
        <fullName evidence="1">Phosphopantetheine adenylyltransferase</fullName>
        <ecNumber evidence="1">2.7.7.3</ecNumber>
    </recommendedName>
    <alternativeName>
        <fullName evidence="1">Dephospho-CoA pyrophosphorylase</fullName>
    </alternativeName>
    <alternativeName>
        <fullName evidence="1">Pantetheine-phosphate adenylyltransferase</fullName>
        <shortName evidence="1">PPAT</shortName>
    </alternativeName>
</protein>
<reference key="1">
    <citation type="journal article" date="2006" name="J. Bacteriol.">
        <title>Chromosome rearrangement and diversification of Francisella tularensis revealed by the type B (OSU18) genome sequence.</title>
        <authorList>
            <person name="Petrosino J.F."/>
            <person name="Xiang Q."/>
            <person name="Karpathy S.E."/>
            <person name="Jiang H."/>
            <person name="Yerrapragada S."/>
            <person name="Liu Y."/>
            <person name="Gioia J."/>
            <person name="Hemphill L."/>
            <person name="Gonzalez A."/>
            <person name="Raghavan T.M."/>
            <person name="Uzman A."/>
            <person name="Fox G.E."/>
            <person name="Highlander S."/>
            <person name="Reichard M."/>
            <person name="Morton R.J."/>
            <person name="Clinkenbeard K.D."/>
            <person name="Weinstock G.M."/>
        </authorList>
    </citation>
    <scope>NUCLEOTIDE SEQUENCE [LARGE SCALE GENOMIC DNA]</scope>
    <source>
        <strain>OSU18</strain>
    </source>
</reference>